<sequence length="295" mass="30979">MSIASIASTAQGSATILDGKALAKQIEQQLSTRVDAIKAKTGRTPSLATILVGDDPASATYVRMKGNACQRVGMDSIRVEMPSATTTAELMAKIDELNNNPDVHGILLQHPVPAHIDERACFEQIDLAKDVDGVTCLGFGRMAMQQSAYGSCTPQGIMHLLEHHNIELAGLEAVVVGRSAILGKPMAMMLLNANCTVTICHSRTQDLESHIKRADIVVGAVGVPELIKANWIKAGAVVIDAGFHPTDNGGVGDIELQGVENIASAYTPVPGGVGPMTINTLIRQTVDAAEKSAGL</sequence>
<organism>
    <name type="scientific">Psychrobacter arcticus (strain DSM 17307 / VKM B-2377 / 273-4)</name>
    <dbReference type="NCBI Taxonomy" id="259536"/>
    <lineage>
        <taxon>Bacteria</taxon>
        <taxon>Pseudomonadati</taxon>
        <taxon>Pseudomonadota</taxon>
        <taxon>Gammaproteobacteria</taxon>
        <taxon>Moraxellales</taxon>
        <taxon>Moraxellaceae</taxon>
        <taxon>Psychrobacter</taxon>
    </lineage>
</organism>
<protein>
    <recommendedName>
        <fullName evidence="1">Bifunctional protein FolD</fullName>
    </recommendedName>
    <domain>
        <recommendedName>
            <fullName evidence="1">Methylenetetrahydrofolate dehydrogenase</fullName>
            <ecNumber evidence="1">1.5.1.5</ecNumber>
        </recommendedName>
    </domain>
    <domain>
        <recommendedName>
            <fullName evidence="1">Methenyltetrahydrofolate cyclohydrolase</fullName>
            <ecNumber evidence="1">3.5.4.9</ecNumber>
        </recommendedName>
    </domain>
</protein>
<dbReference type="EC" id="1.5.1.5" evidence="1"/>
<dbReference type="EC" id="3.5.4.9" evidence="1"/>
<dbReference type="EMBL" id="CP000082">
    <property type="protein sequence ID" value="AAZ18532.1"/>
    <property type="molecule type" value="Genomic_DNA"/>
</dbReference>
<dbReference type="RefSeq" id="WP_011279959.1">
    <property type="nucleotide sequence ID" value="NC_007204.1"/>
</dbReference>
<dbReference type="SMR" id="Q4FTX6"/>
<dbReference type="STRING" id="259536.Psyc_0673"/>
<dbReference type="KEGG" id="par:Psyc_0673"/>
<dbReference type="eggNOG" id="COG0190">
    <property type="taxonomic scope" value="Bacteria"/>
</dbReference>
<dbReference type="HOGENOM" id="CLU_034045_2_1_6"/>
<dbReference type="OrthoDB" id="9803580at2"/>
<dbReference type="UniPathway" id="UPA00193"/>
<dbReference type="Proteomes" id="UP000000546">
    <property type="component" value="Chromosome"/>
</dbReference>
<dbReference type="GO" id="GO:0005829">
    <property type="term" value="C:cytosol"/>
    <property type="evidence" value="ECO:0007669"/>
    <property type="project" value="TreeGrafter"/>
</dbReference>
<dbReference type="GO" id="GO:0004477">
    <property type="term" value="F:methenyltetrahydrofolate cyclohydrolase activity"/>
    <property type="evidence" value="ECO:0007669"/>
    <property type="project" value="UniProtKB-UniRule"/>
</dbReference>
<dbReference type="GO" id="GO:0004488">
    <property type="term" value="F:methylenetetrahydrofolate dehydrogenase (NADP+) activity"/>
    <property type="evidence" value="ECO:0007669"/>
    <property type="project" value="UniProtKB-UniRule"/>
</dbReference>
<dbReference type="GO" id="GO:0000105">
    <property type="term" value="P:L-histidine biosynthetic process"/>
    <property type="evidence" value="ECO:0007669"/>
    <property type="project" value="UniProtKB-KW"/>
</dbReference>
<dbReference type="GO" id="GO:0009086">
    <property type="term" value="P:methionine biosynthetic process"/>
    <property type="evidence" value="ECO:0007669"/>
    <property type="project" value="UniProtKB-KW"/>
</dbReference>
<dbReference type="GO" id="GO:0006164">
    <property type="term" value="P:purine nucleotide biosynthetic process"/>
    <property type="evidence" value="ECO:0007669"/>
    <property type="project" value="UniProtKB-KW"/>
</dbReference>
<dbReference type="GO" id="GO:0035999">
    <property type="term" value="P:tetrahydrofolate interconversion"/>
    <property type="evidence" value="ECO:0007669"/>
    <property type="project" value="UniProtKB-UniRule"/>
</dbReference>
<dbReference type="CDD" id="cd01080">
    <property type="entry name" value="NAD_bind_m-THF_DH_Cyclohyd"/>
    <property type="match status" value="1"/>
</dbReference>
<dbReference type="FunFam" id="3.40.50.720:FF:000094">
    <property type="entry name" value="Bifunctional protein FolD"/>
    <property type="match status" value="1"/>
</dbReference>
<dbReference type="FunFam" id="3.40.50.10860:FF:000005">
    <property type="entry name" value="C-1-tetrahydrofolate synthase, cytoplasmic, putative"/>
    <property type="match status" value="1"/>
</dbReference>
<dbReference type="Gene3D" id="3.40.50.10860">
    <property type="entry name" value="Leucine Dehydrogenase, chain A, domain 1"/>
    <property type="match status" value="1"/>
</dbReference>
<dbReference type="Gene3D" id="3.40.50.720">
    <property type="entry name" value="NAD(P)-binding Rossmann-like Domain"/>
    <property type="match status" value="1"/>
</dbReference>
<dbReference type="HAMAP" id="MF_01576">
    <property type="entry name" value="THF_DHG_CYH"/>
    <property type="match status" value="1"/>
</dbReference>
<dbReference type="InterPro" id="IPR046346">
    <property type="entry name" value="Aminoacid_DH-like_N_sf"/>
</dbReference>
<dbReference type="InterPro" id="IPR036291">
    <property type="entry name" value="NAD(P)-bd_dom_sf"/>
</dbReference>
<dbReference type="InterPro" id="IPR000672">
    <property type="entry name" value="THF_DH/CycHdrlase"/>
</dbReference>
<dbReference type="InterPro" id="IPR020630">
    <property type="entry name" value="THF_DH/CycHdrlase_cat_dom"/>
</dbReference>
<dbReference type="InterPro" id="IPR020867">
    <property type="entry name" value="THF_DH/CycHdrlase_CS"/>
</dbReference>
<dbReference type="InterPro" id="IPR020631">
    <property type="entry name" value="THF_DH/CycHdrlase_NAD-bd_dom"/>
</dbReference>
<dbReference type="NCBIfam" id="NF010783">
    <property type="entry name" value="PRK14186.1"/>
    <property type="match status" value="1"/>
</dbReference>
<dbReference type="NCBIfam" id="NF010788">
    <property type="entry name" value="PRK14192.1"/>
    <property type="match status" value="1"/>
</dbReference>
<dbReference type="PANTHER" id="PTHR48099:SF5">
    <property type="entry name" value="C-1-TETRAHYDROFOLATE SYNTHASE, CYTOPLASMIC"/>
    <property type="match status" value="1"/>
</dbReference>
<dbReference type="PANTHER" id="PTHR48099">
    <property type="entry name" value="C-1-TETRAHYDROFOLATE SYNTHASE, CYTOPLASMIC-RELATED"/>
    <property type="match status" value="1"/>
</dbReference>
<dbReference type="Pfam" id="PF00763">
    <property type="entry name" value="THF_DHG_CYH"/>
    <property type="match status" value="1"/>
</dbReference>
<dbReference type="Pfam" id="PF02882">
    <property type="entry name" value="THF_DHG_CYH_C"/>
    <property type="match status" value="1"/>
</dbReference>
<dbReference type="PRINTS" id="PR00085">
    <property type="entry name" value="THFDHDRGNASE"/>
</dbReference>
<dbReference type="SUPFAM" id="SSF53223">
    <property type="entry name" value="Aminoacid dehydrogenase-like, N-terminal domain"/>
    <property type="match status" value="1"/>
</dbReference>
<dbReference type="SUPFAM" id="SSF51735">
    <property type="entry name" value="NAD(P)-binding Rossmann-fold domains"/>
    <property type="match status" value="1"/>
</dbReference>
<dbReference type="PROSITE" id="PS00767">
    <property type="entry name" value="THF_DHG_CYH_2"/>
    <property type="match status" value="1"/>
</dbReference>
<gene>
    <name evidence="1" type="primary">folD</name>
    <name type="ordered locus">Psyc_0673</name>
</gene>
<proteinExistence type="inferred from homology"/>
<feature type="chain" id="PRO_0000268454" description="Bifunctional protein FolD">
    <location>
        <begin position="1"/>
        <end position="295"/>
    </location>
</feature>
<feature type="binding site" evidence="1">
    <location>
        <begin position="177"/>
        <end position="179"/>
    </location>
    <ligand>
        <name>NADP(+)</name>
        <dbReference type="ChEBI" id="CHEBI:58349"/>
    </ligand>
</feature>
<feature type="binding site" evidence="1">
    <location>
        <position position="202"/>
    </location>
    <ligand>
        <name>NADP(+)</name>
        <dbReference type="ChEBI" id="CHEBI:58349"/>
    </ligand>
</feature>
<comment type="function">
    <text evidence="1">Catalyzes the oxidation of 5,10-methylenetetrahydrofolate to 5,10-methenyltetrahydrofolate and then the hydrolysis of 5,10-methenyltetrahydrofolate to 10-formyltetrahydrofolate.</text>
</comment>
<comment type="catalytic activity">
    <reaction evidence="1">
        <text>(6R)-5,10-methylene-5,6,7,8-tetrahydrofolate + NADP(+) = (6R)-5,10-methenyltetrahydrofolate + NADPH</text>
        <dbReference type="Rhea" id="RHEA:22812"/>
        <dbReference type="ChEBI" id="CHEBI:15636"/>
        <dbReference type="ChEBI" id="CHEBI:57455"/>
        <dbReference type="ChEBI" id="CHEBI:57783"/>
        <dbReference type="ChEBI" id="CHEBI:58349"/>
        <dbReference type="EC" id="1.5.1.5"/>
    </reaction>
</comment>
<comment type="catalytic activity">
    <reaction evidence="1">
        <text>(6R)-5,10-methenyltetrahydrofolate + H2O = (6R)-10-formyltetrahydrofolate + H(+)</text>
        <dbReference type="Rhea" id="RHEA:23700"/>
        <dbReference type="ChEBI" id="CHEBI:15377"/>
        <dbReference type="ChEBI" id="CHEBI:15378"/>
        <dbReference type="ChEBI" id="CHEBI:57455"/>
        <dbReference type="ChEBI" id="CHEBI:195366"/>
        <dbReference type="EC" id="3.5.4.9"/>
    </reaction>
</comment>
<comment type="pathway">
    <text evidence="1">One-carbon metabolism; tetrahydrofolate interconversion.</text>
</comment>
<comment type="subunit">
    <text evidence="1">Homodimer.</text>
</comment>
<comment type="similarity">
    <text evidence="1">Belongs to the tetrahydrofolate dehydrogenase/cyclohydrolase family.</text>
</comment>
<accession>Q4FTX6</accession>
<reference key="1">
    <citation type="journal article" date="2010" name="Appl. Environ. Microbiol.">
        <title>The genome sequence of Psychrobacter arcticus 273-4, a psychroactive Siberian permafrost bacterium, reveals mechanisms for adaptation to low-temperature growth.</title>
        <authorList>
            <person name="Ayala-del-Rio H.L."/>
            <person name="Chain P.S."/>
            <person name="Grzymski J.J."/>
            <person name="Ponder M.A."/>
            <person name="Ivanova N."/>
            <person name="Bergholz P.W."/>
            <person name="Di Bartolo G."/>
            <person name="Hauser L."/>
            <person name="Land M."/>
            <person name="Bakermans C."/>
            <person name="Rodrigues D."/>
            <person name="Klappenbach J."/>
            <person name="Zarka D."/>
            <person name="Larimer F."/>
            <person name="Richardson P."/>
            <person name="Murray A."/>
            <person name="Thomashow M."/>
            <person name="Tiedje J.M."/>
        </authorList>
    </citation>
    <scope>NUCLEOTIDE SEQUENCE [LARGE SCALE GENOMIC DNA]</scope>
    <source>
        <strain>DSM 17307 / VKM B-2377 / 273-4</strain>
    </source>
</reference>
<keyword id="KW-0028">Amino-acid biosynthesis</keyword>
<keyword id="KW-0368">Histidine biosynthesis</keyword>
<keyword id="KW-0378">Hydrolase</keyword>
<keyword id="KW-0486">Methionine biosynthesis</keyword>
<keyword id="KW-0511">Multifunctional enzyme</keyword>
<keyword id="KW-0521">NADP</keyword>
<keyword id="KW-0554">One-carbon metabolism</keyword>
<keyword id="KW-0560">Oxidoreductase</keyword>
<keyword id="KW-0658">Purine biosynthesis</keyword>
<keyword id="KW-1185">Reference proteome</keyword>
<evidence type="ECO:0000255" key="1">
    <source>
        <dbReference type="HAMAP-Rule" id="MF_01576"/>
    </source>
</evidence>
<name>FOLD_PSYA2</name>